<sequence length="377" mass="43947">MNLKHPTRKDHILIKVVNNLLIDLPTPSNLSIMWNWGSLLGIFLIIPIITGLFLAMHYTPHMNLAFESIYHIMYDVNMGWLIRFIHVNGASFFFIFLYLHMARGMYYYSFHYKEVWLIGCTIYVVSMATAFMGYILPWGQMSLWGATVITNMLTTIPYLGQYLVQWIWGGFAVGNPTLNRFFVLHFILPFIILALSIIHLIFLHSKGSTNPLGMNSNAYKIPFHPYYSSKDLMFLLLLMMIMMVIIFWNPFLFMDAENSLEANFMKTPVHIKPEWYFLWVYTLLRSIPNKLGGVLTMVFSILILFLLPFISNFNYITSMSMINKLLFWSFVVNMLILTWIGGMPVVPLFETMGLTSTFLYFIIILIYSNSFLMINKS</sequence>
<evidence type="ECO:0000250" key="1"/>
<evidence type="ECO:0000250" key="2">
    <source>
        <dbReference type="UniProtKB" id="P00157"/>
    </source>
</evidence>
<evidence type="ECO:0000250" key="3">
    <source>
        <dbReference type="UniProtKB" id="P00163"/>
    </source>
</evidence>
<evidence type="ECO:0000255" key="4"/>
<evidence type="ECO:0000255" key="5">
    <source>
        <dbReference type="PROSITE-ProRule" id="PRU00967"/>
    </source>
</evidence>
<evidence type="ECO:0000255" key="6">
    <source>
        <dbReference type="PROSITE-ProRule" id="PRU00968"/>
    </source>
</evidence>
<reference key="1">
    <citation type="journal article" date="2007" name="Mol. Biol. Evol.">
        <title>Mitochondrial genome and nuclear sequence data support myzostomida as part of the annelid radiation.</title>
        <authorList>
            <person name="Bleidorn C."/>
            <person name="Eeckhaut I."/>
            <person name="Podsiadlowski L."/>
            <person name="Schult N."/>
            <person name="McHugh D."/>
            <person name="Halanych K.M."/>
            <person name="Milinkovitch M.C."/>
            <person name="Tiedemann R."/>
        </authorList>
    </citation>
    <scope>NUCLEOTIDE SEQUENCE [GENOMIC DNA]</scope>
</reference>
<dbReference type="EMBL" id="EF506562">
    <property type="protein sequence ID" value="ABR12404.1"/>
    <property type="molecule type" value="Genomic_DNA"/>
</dbReference>
<dbReference type="SMR" id="A6MVL7"/>
<dbReference type="GO" id="GO:0005743">
    <property type="term" value="C:mitochondrial inner membrane"/>
    <property type="evidence" value="ECO:0007669"/>
    <property type="project" value="UniProtKB-SubCell"/>
</dbReference>
<dbReference type="GO" id="GO:0045275">
    <property type="term" value="C:respiratory chain complex III"/>
    <property type="evidence" value="ECO:0007669"/>
    <property type="project" value="InterPro"/>
</dbReference>
<dbReference type="GO" id="GO:0046872">
    <property type="term" value="F:metal ion binding"/>
    <property type="evidence" value="ECO:0007669"/>
    <property type="project" value="UniProtKB-KW"/>
</dbReference>
<dbReference type="GO" id="GO:0008121">
    <property type="term" value="F:ubiquinol-cytochrome-c reductase activity"/>
    <property type="evidence" value="ECO:0007669"/>
    <property type="project" value="InterPro"/>
</dbReference>
<dbReference type="GO" id="GO:0006122">
    <property type="term" value="P:mitochondrial electron transport, ubiquinol to cytochrome c"/>
    <property type="evidence" value="ECO:0007669"/>
    <property type="project" value="TreeGrafter"/>
</dbReference>
<dbReference type="CDD" id="cd00290">
    <property type="entry name" value="cytochrome_b_C"/>
    <property type="match status" value="1"/>
</dbReference>
<dbReference type="CDD" id="cd00284">
    <property type="entry name" value="Cytochrome_b_N"/>
    <property type="match status" value="1"/>
</dbReference>
<dbReference type="Gene3D" id="1.20.810.10">
    <property type="entry name" value="Cytochrome Bc1 Complex, Chain C"/>
    <property type="match status" value="1"/>
</dbReference>
<dbReference type="InterPro" id="IPR005798">
    <property type="entry name" value="Cyt_b/b6_C"/>
</dbReference>
<dbReference type="InterPro" id="IPR036150">
    <property type="entry name" value="Cyt_b/b6_C_sf"/>
</dbReference>
<dbReference type="InterPro" id="IPR005797">
    <property type="entry name" value="Cyt_b/b6_N"/>
</dbReference>
<dbReference type="InterPro" id="IPR027387">
    <property type="entry name" value="Cytb/b6-like_sf"/>
</dbReference>
<dbReference type="InterPro" id="IPR030689">
    <property type="entry name" value="Cytochrome_b"/>
</dbReference>
<dbReference type="InterPro" id="IPR048260">
    <property type="entry name" value="Cytochrome_b_C_euk/bac"/>
</dbReference>
<dbReference type="InterPro" id="IPR048259">
    <property type="entry name" value="Cytochrome_b_N_euk/bac"/>
</dbReference>
<dbReference type="InterPro" id="IPR016174">
    <property type="entry name" value="Di-haem_cyt_TM"/>
</dbReference>
<dbReference type="PANTHER" id="PTHR19271">
    <property type="entry name" value="CYTOCHROME B"/>
    <property type="match status" value="1"/>
</dbReference>
<dbReference type="PANTHER" id="PTHR19271:SF16">
    <property type="entry name" value="CYTOCHROME B"/>
    <property type="match status" value="1"/>
</dbReference>
<dbReference type="Pfam" id="PF00032">
    <property type="entry name" value="Cytochrom_B_C"/>
    <property type="match status" value="1"/>
</dbReference>
<dbReference type="Pfam" id="PF00033">
    <property type="entry name" value="Cytochrome_B"/>
    <property type="match status" value="1"/>
</dbReference>
<dbReference type="PIRSF" id="PIRSF038885">
    <property type="entry name" value="COB"/>
    <property type="match status" value="1"/>
</dbReference>
<dbReference type="SUPFAM" id="SSF81648">
    <property type="entry name" value="a domain/subunit of cytochrome bc1 complex (Ubiquinol-cytochrome c reductase)"/>
    <property type="match status" value="1"/>
</dbReference>
<dbReference type="SUPFAM" id="SSF81342">
    <property type="entry name" value="Transmembrane di-heme cytochromes"/>
    <property type="match status" value="1"/>
</dbReference>
<dbReference type="PROSITE" id="PS51003">
    <property type="entry name" value="CYTB_CTER"/>
    <property type="match status" value="1"/>
</dbReference>
<dbReference type="PROSITE" id="PS51002">
    <property type="entry name" value="CYTB_NTER"/>
    <property type="match status" value="1"/>
</dbReference>
<protein>
    <recommendedName>
        <fullName>Cytochrome b</fullName>
    </recommendedName>
    <alternativeName>
        <fullName>Complex III subunit 3</fullName>
    </alternativeName>
    <alternativeName>
        <fullName>Complex III subunit III</fullName>
    </alternativeName>
    <alternativeName>
        <fullName>Cytochrome b-c1 complex subunit 3</fullName>
    </alternativeName>
    <alternativeName>
        <fullName>Ubiquinol-cytochrome-c reductase complex cytochrome b subunit</fullName>
    </alternativeName>
</protein>
<accession>A6MVL7</accession>
<proteinExistence type="inferred from homology"/>
<name>CYB_MYZSE</name>
<keyword id="KW-0249">Electron transport</keyword>
<keyword id="KW-0349">Heme</keyword>
<keyword id="KW-0408">Iron</keyword>
<keyword id="KW-0472">Membrane</keyword>
<keyword id="KW-0479">Metal-binding</keyword>
<keyword id="KW-0496">Mitochondrion</keyword>
<keyword id="KW-0999">Mitochondrion inner membrane</keyword>
<keyword id="KW-0679">Respiratory chain</keyword>
<keyword id="KW-0812">Transmembrane</keyword>
<keyword id="KW-1133">Transmembrane helix</keyword>
<keyword id="KW-0813">Transport</keyword>
<keyword id="KW-0830">Ubiquinone</keyword>
<gene>
    <name type="primary">mt:Cyt-b</name>
    <name type="synonym">Cob</name>
    <name type="synonym">cytb</name>
</gene>
<feature type="chain" id="PRO_0000357463" description="Cytochrome b">
    <location>
        <begin position="1"/>
        <end position="377"/>
    </location>
</feature>
<feature type="transmembrane region" description="Helical" evidence="3">
    <location>
        <begin position="36"/>
        <end position="56"/>
    </location>
</feature>
<feature type="transmembrane region" description="Helical" evidence="3">
    <location>
        <begin position="80"/>
        <end position="102"/>
    </location>
</feature>
<feature type="transmembrane region" description="Helical" evidence="3">
    <location>
        <begin position="115"/>
        <end position="135"/>
    </location>
</feature>
<feature type="transmembrane region" description="Helical" evidence="3">
    <location>
        <begin position="181"/>
        <end position="201"/>
    </location>
</feature>
<feature type="transmembrane region" description="Helical" evidence="3">
    <location>
        <begin position="227"/>
        <end position="247"/>
    </location>
</feature>
<feature type="transmembrane region" description="Helical" evidence="4">
    <location>
        <begin position="291"/>
        <end position="311"/>
    </location>
</feature>
<feature type="transmembrane region" description="Helical" evidence="4">
    <location>
        <begin position="326"/>
        <end position="346"/>
    </location>
</feature>
<feature type="transmembrane region" description="Helical" evidence="4">
    <location>
        <begin position="354"/>
        <end position="374"/>
    </location>
</feature>
<feature type="binding site" description="axial binding residue" evidence="3">
    <location>
        <position position="86"/>
    </location>
    <ligand>
        <name>heme b</name>
        <dbReference type="ChEBI" id="CHEBI:60344"/>
        <label>b562</label>
    </ligand>
    <ligandPart>
        <name>Fe</name>
        <dbReference type="ChEBI" id="CHEBI:18248"/>
    </ligandPart>
</feature>
<feature type="binding site" description="axial binding residue" evidence="3">
    <location>
        <position position="100"/>
    </location>
    <ligand>
        <name>heme b</name>
        <dbReference type="ChEBI" id="CHEBI:60344"/>
        <label>b566</label>
    </ligand>
    <ligandPart>
        <name>Fe</name>
        <dbReference type="ChEBI" id="CHEBI:18248"/>
    </ligandPart>
</feature>
<feature type="binding site" description="axial binding residue" evidence="3">
    <location>
        <position position="185"/>
    </location>
    <ligand>
        <name>heme b</name>
        <dbReference type="ChEBI" id="CHEBI:60344"/>
        <label>b562</label>
    </ligand>
    <ligandPart>
        <name>Fe</name>
        <dbReference type="ChEBI" id="CHEBI:18248"/>
    </ligandPart>
</feature>
<feature type="binding site" description="axial binding residue" evidence="3">
    <location>
        <position position="199"/>
    </location>
    <ligand>
        <name>heme b</name>
        <dbReference type="ChEBI" id="CHEBI:60344"/>
        <label>b566</label>
    </ligand>
    <ligandPart>
        <name>Fe</name>
        <dbReference type="ChEBI" id="CHEBI:18248"/>
    </ligandPart>
</feature>
<feature type="binding site" evidence="2">
    <location>
        <position position="204"/>
    </location>
    <ligand>
        <name>a ubiquinone</name>
        <dbReference type="ChEBI" id="CHEBI:16389"/>
    </ligand>
</feature>
<organism>
    <name type="scientific">Myzostoma seymourcollegiorum</name>
    <name type="common">Polychaete worm</name>
    <dbReference type="NCBI Taxonomy" id="447489"/>
    <lineage>
        <taxon>Eukaryota</taxon>
        <taxon>Metazoa</taxon>
        <taxon>Spiralia</taxon>
        <taxon>Lophotrochozoa</taxon>
        <taxon>Annelida</taxon>
        <taxon>Myzostomida</taxon>
        <taxon>Myzostomatidae</taxon>
        <taxon>Myzostoma</taxon>
    </lineage>
</organism>
<geneLocation type="mitochondrion"/>
<comment type="function">
    <text evidence="3">Component of the ubiquinol-cytochrome c reductase complex (complex III or cytochrome b-c1 complex) that is part of the mitochondrial respiratory chain. The b-c1 complex mediates electron transfer from ubiquinol to cytochrome c. Contributes to the generation of a proton gradient across the mitochondrial membrane that is then used for ATP synthesis.</text>
</comment>
<comment type="cofactor">
    <cofactor evidence="3">
        <name>heme b</name>
        <dbReference type="ChEBI" id="CHEBI:60344"/>
    </cofactor>
    <text evidence="3">Binds 2 heme b groups non-covalently.</text>
</comment>
<comment type="subunit">
    <text evidence="1">The main subunits of complex b-c1 are: cytochrome b, cytochrome c1 and the Rieske protein.</text>
</comment>
<comment type="subcellular location">
    <subcellularLocation>
        <location evidence="3">Mitochondrion inner membrane</location>
        <topology evidence="3">Multi-pass membrane protein</topology>
    </subcellularLocation>
</comment>
<comment type="similarity">
    <text evidence="5 6">Belongs to the cytochrome b family.</text>
</comment>
<comment type="caution">
    <text evidence="3">The protein contains an even number of transmembrane helices, fewer than predicted by bioinformatics tools.</text>
</comment>